<gene>
    <name evidence="1" type="primary">apt</name>
    <name type="ordered locus">SSON_0456</name>
</gene>
<organism>
    <name type="scientific">Shigella sonnei (strain Ss046)</name>
    <dbReference type="NCBI Taxonomy" id="300269"/>
    <lineage>
        <taxon>Bacteria</taxon>
        <taxon>Pseudomonadati</taxon>
        <taxon>Pseudomonadota</taxon>
        <taxon>Gammaproteobacteria</taxon>
        <taxon>Enterobacterales</taxon>
        <taxon>Enterobacteriaceae</taxon>
        <taxon>Shigella</taxon>
    </lineage>
</organism>
<sequence length="183" mass="19859">MTATAQQLEYLKNSIKSIQDYPKPGILFRDVTSLLEDPKAYALSIDLLVERYKNAGITKVVGTEARGFLFGAPVALGLGVGFVPVRKPGKLPRETISETYDLEYGTDQLEIHVDAIKPGDKVLVVDDLLATGGTIEATVKLIRRLGGEVADAAFIINLFDLGGEQRLEKQGITSYSLVPFPGH</sequence>
<name>APT_SHISS</name>
<proteinExistence type="inferred from homology"/>
<protein>
    <recommendedName>
        <fullName evidence="1">Adenine phosphoribosyltransferase</fullName>
        <shortName evidence="1">APRT</shortName>
        <ecNumber evidence="1">2.4.2.7</ecNumber>
    </recommendedName>
</protein>
<comment type="function">
    <text evidence="1">Catalyzes a salvage reaction resulting in the formation of AMP, that is energically less costly than de novo synthesis.</text>
</comment>
<comment type="catalytic activity">
    <reaction evidence="1">
        <text>AMP + diphosphate = 5-phospho-alpha-D-ribose 1-diphosphate + adenine</text>
        <dbReference type="Rhea" id="RHEA:16609"/>
        <dbReference type="ChEBI" id="CHEBI:16708"/>
        <dbReference type="ChEBI" id="CHEBI:33019"/>
        <dbReference type="ChEBI" id="CHEBI:58017"/>
        <dbReference type="ChEBI" id="CHEBI:456215"/>
        <dbReference type="EC" id="2.4.2.7"/>
    </reaction>
</comment>
<comment type="pathway">
    <text evidence="1">Purine metabolism; AMP biosynthesis via salvage pathway; AMP from adenine: step 1/1.</text>
</comment>
<comment type="subunit">
    <text evidence="1">Homodimer.</text>
</comment>
<comment type="subcellular location">
    <subcellularLocation>
        <location evidence="1">Cytoplasm</location>
    </subcellularLocation>
</comment>
<comment type="similarity">
    <text evidence="1">Belongs to the purine/pyrimidine phosphoribosyltransferase family.</text>
</comment>
<accession>Q3Z4T0</accession>
<evidence type="ECO:0000255" key="1">
    <source>
        <dbReference type="HAMAP-Rule" id="MF_00004"/>
    </source>
</evidence>
<keyword id="KW-0963">Cytoplasm</keyword>
<keyword id="KW-0328">Glycosyltransferase</keyword>
<keyword id="KW-0660">Purine salvage</keyword>
<keyword id="KW-1185">Reference proteome</keyword>
<keyword id="KW-0808">Transferase</keyword>
<reference key="1">
    <citation type="journal article" date="2005" name="Nucleic Acids Res.">
        <title>Genome dynamics and diversity of Shigella species, the etiologic agents of bacillary dysentery.</title>
        <authorList>
            <person name="Yang F."/>
            <person name="Yang J."/>
            <person name="Zhang X."/>
            <person name="Chen L."/>
            <person name="Jiang Y."/>
            <person name="Yan Y."/>
            <person name="Tang X."/>
            <person name="Wang J."/>
            <person name="Xiong Z."/>
            <person name="Dong J."/>
            <person name="Xue Y."/>
            <person name="Zhu Y."/>
            <person name="Xu X."/>
            <person name="Sun L."/>
            <person name="Chen S."/>
            <person name="Nie H."/>
            <person name="Peng J."/>
            <person name="Xu J."/>
            <person name="Wang Y."/>
            <person name="Yuan Z."/>
            <person name="Wen Y."/>
            <person name="Yao Z."/>
            <person name="Shen Y."/>
            <person name="Qiang B."/>
            <person name="Hou Y."/>
            <person name="Yu J."/>
            <person name="Jin Q."/>
        </authorList>
    </citation>
    <scope>NUCLEOTIDE SEQUENCE [LARGE SCALE GENOMIC DNA]</scope>
    <source>
        <strain>Ss046</strain>
    </source>
</reference>
<feature type="chain" id="PRO_1000000341" description="Adenine phosphoribosyltransferase">
    <location>
        <begin position="1"/>
        <end position="183"/>
    </location>
</feature>
<dbReference type="EC" id="2.4.2.7" evidence="1"/>
<dbReference type="EMBL" id="CP000038">
    <property type="protein sequence ID" value="AAZ87232.1"/>
    <property type="molecule type" value="Genomic_DNA"/>
</dbReference>
<dbReference type="RefSeq" id="WP_000127356.1">
    <property type="nucleotide sequence ID" value="NC_007384.1"/>
</dbReference>
<dbReference type="SMR" id="Q3Z4T0"/>
<dbReference type="GeneID" id="93776981"/>
<dbReference type="KEGG" id="ssn:SSON_0456"/>
<dbReference type="HOGENOM" id="CLU_063339_3_0_6"/>
<dbReference type="UniPathway" id="UPA00588">
    <property type="reaction ID" value="UER00646"/>
</dbReference>
<dbReference type="Proteomes" id="UP000002529">
    <property type="component" value="Chromosome"/>
</dbReference>
<dbReference type="GO" id="GO:0005737">
    <property type="term" value="C:cytoplasm"/>
    <property type="evidence" value="ECO:0007669"/>
    <property type="project" value="UniProtKB-SubCell"/>
</dbReference>
<dbReference type="GO" id="GO:0002055">
    <property type="term" value="F:adenine binding"/>
    <property type="evidence" value="ECO:0007669"/>
    <property type="project" value="TreeGrafter"/>
</dbReference>
<dbReference type="GO" id="GO:0003999">
    <property type="term" value="F:adenine phosphoribosyltransferase activity"/>
    <property type="evidence" value="ECO:0007669"/>
    <property type="project" value="UniProtKB-UniRule"/>
</dbReference>
<dbReference type="GO" id="GO:0016208">
    <property type="term" value="F:AMP binding"/>
    <property type="evidence" value="ECO:0007669"/>
    <property type="project" value="TreeGrafter"/>
</dbReference>
<dbReference type="GO" id="GO:0006168">
    <property type="term" value="P:adenine salvage"/>
    <property type="evidence" value="ECO:0007669"/>
    <property type="project" value="InterPro"/>
</dbReference>
<dbReference type="GO" id="GO:0044209">
    <property type="term" value="P:AMP salvage"/>
    <property type="evidence" value="ECO:0007669"/>
    <property type="project" value="UniProtKB-UniRule"/>
</dbReference>
<dbReference type="GO" id="GO:0006166">
    <property type="term" value="P:purine ribonucleoside salvage"/>
    <property type="evidence" value="ECO:0007669"/>
    <property type="project" value="UniProtKB-KW"/>
</dbReference>
<dbReference type="CDD" id="cd06223">
    <property type="entry name" value="PRTases_typeI"/>
    <property type="match status" value="1"/>
</dbReference>
<dbReference type="FunFam" id="3.40.50.2020:FF:000004">
    <property type="entry name" value="Adenine phosphoribosyltransferase"/>
    <property type="match status" value="1"/>
</dbReference>
<dbReference type="Gene3D" id="3.40.50.2020">
    <property type="match status" value="1"/>
</dbReference>
<dbReference type="HAMAP" id="MF_00004">
    <property type="entry name" value="Aden_phosphoribosyltr"/>
    <property type="match status" value="1"/>
</dbReference>
<dbReference type="InterPro" id="IPR005764">
    <property type="entry name" value="Ade_phspho_trans"/>
</dbReference>
<dbReference type="InterPro" id="IPR000836">
    <property type="entry name" value="PRibTrfase_dom"/>
</dbReference>
<dbReference type="InterPro" id="IPR029057">
    <property type="entry name" value="PRTase-like"/>
</dbReference>
<dbReference type="InterPro" id="IPR050054">
    <property type="entry name" value="UPRTase/APRTase"/>
</dbReference>
<dbReference type="NCBIfam" id="TIGR01090">
    <property type="entry name" value="apt"/>
    <property type="match status" value="1"/>
</dbReference>
<dbReference type="NCBIfam" id="NF002632">
    <property type="entry name" value="PRK02304.1-1"/>
    <property type="match status" value="1"/>
</dbReference>
<dbReference type="NCBIfam" id="NF002633">
    <property type="entry name" value="PRK02304.1-2"/>
    <property type="match status" value="1"/>
</dbReference>
<dbReference type="NCBIfam" id="NF002634">
    <property type="entry name" value="PRK02304.1-3"/>
    <property type="match status" value="1"/>
</dbReference>
<dbReference type="NCBIfam" id="NF002636">
    <property type="entry name" value="PRK02304.1-5"/>
    <property type="match status" value="1"/>
</dbReference>
<dbReference type="PANTHER" id="PTHR32315">
    <property type="entry name" value="ADENINE PHOSPHORIBOSYLTRANSFERASE"/>
    <property type="match status" value="1"/>
</dbReference>
<dbReference type="PANTHER" id="PTHR32315:SF3">
    <property type="entry name" value="ADENINE PHOSPHORIBOSYLTRANSFERASE"/>
    <property type="match status" value="1"/>
</dbReference>
<dbReference type="Pfam" id="PF00156">
    <property type="entry name" value="Pribosyltran"/>
    <property type="match status" value="1"/>
</dbReference>
<dbReference type="SUPFAM" id="SSF53271">
    <property type="entry name" value="PRTase-like"/>
    <property type="match status" value="1"/>
</dbReference>
<dbReference type="PROSITE" id="PS00103">
    <property type="entry name" value="PUR_PYR_PR_TRANSFER"/>
    <property type="match status" value="1"/>
</dbReference>